<protein>
    <recommendedName>
        <fullName evidence="1">Pyridoxine/pyridoxamine 5'-phosphate oxidase</fullName>
        <ecNumber evidence="1">1.4.3.5</ecNumber>
    </recommendedName>
    <alternativeName>
        <fullName evidence="1">PNP/PMP oxidase</fullName>
        <shortName evidence="1">PNPOx</shortName>
    </alternativeName>
    <alternativeName>
        <fullName evidence="1">Pyridoxal 5'-phosphate synthase</fullName>
    </alternativeName>
</protein>
<reference key="1">
    <citation type="journal article" date="2007" name="Nat. Biotechnol.">
        <title>Complete genome sequence of the fish pathogen Flavobacterium psychrophilum.</title>
        <authorList>
            <person name="Duchaud E."/>
            <person name="Boussaha M."/>
            <person name="Loux V."/>
            <person name="Bernardet J.-F."/>
            <person name="Michel C."/>
            <person name="Kerouault B."/>
            <person name="Mondot S."/>
            <person name="Nicolas P."/>
            <person name="Bossy R."/>
            <person name="Caron C."/>
            <person name="Bessieres P."/>
            <person name="Gibrat J.-F."/>
            <person name="Claverol S."/>
            <person name="Dumetz F."/>
            <person name="Le Henaff M."/>
            <person name="Benmansour A."/>
        </authorList>
    </citation>
    <scope>NUCLEOTIDE SEQUENCE [LARGE SCALE GENOMIC DNA]</scope>
    <source>
        <strain>ATCC 49511 / DSM 21280 / CIP 103535 / JIP02/86</strain>
    </source>
</reference>
<keyword id="KW-0285">Flavoprotein</keyword>
<keyword id="KW-0288">FMN</keyword>
<keyword id="KW-0560">Oxidoreductase</keyword>
<keyword id="KW-0664">Pyridoxine biosynthesis</keyword>
<keyword id="KW-1185">Reference proteome</keyword>
<gene>
    <name evidence="1" type="primary">pdxH</name>
    <name type="ordered locus">FP1704</name>
</gene>
<accession>A6H098</accession>
<comment type="function">
    <text evidence="1">Catalyzes the oxidation of either pyridoxine 5'-phosphate (PNP) or pyridoxamine 5'-phosphate (PMP) into pyridoxal 5'-phosphate (PLP).</text>
</comment>
<comment type="catalytic activity">
    <reaction evidence="1">
        <text>pyridoxamine 5'-phosphate + O2 + H2O = pyridoxal 5'-phosphate + H2O2 + NH4(+)</text>
        <dbReference type="Rhea" id="RHEA:15817"/>
        <dbReference type="ChEBI" id="CHEBI:15377"/>
        <dbReference type="ChEBI" id="CHEBI:15379"/>
        <dbReference type="ChEBI" id="CHEBI:16240"/>
        <dbReference type="ChEBI" id="CHEBI:28938"/>
        <dbReference type="ChEBI" id="CHEBI:58451"/>
        <dbReference type="ChEBI" id="CHEBI:597326"/>
        <dbReference type="EC" id="1.4.3.5"/>
    </reaction>
</comment>
<comment type="catalytic activity">
    <reaction evidence="1">
        <text>pyridoxine 5'-phosphate + O2 = pyridoxal 5'-phosphate + H2O2</text>
        <dbReference type="Rhea" id="RHEA:15149"/>
        <dbReference type="ChEBI" id="CHEBI:15379"/>
        <dbReference type="ChEBI" id="CHEBI:16240"/>
        <dbReference type="ChEBI" id="CHEBI:58589"/>
        <dbReference type="ChEBI" id="CHEBI:597326"/>
        <dbReference type="EC" id="1.4.3.5"/>
    </reaction>
</comment>
<comment type="cofactor">
    <cofactor evidence="1">
        <name>FMN</name>
        <dbReference type="ChEBI" id="CHEBI:58210"/>
    </cofactor>
    <text evidence="1">Binds 1 FMN per subunit.</text>
</comment>
<comment type="pathway">
    <text evidence="1">Cofactor metabolism; pyridoxal 5'-phosphate salvage; pyridoxal 5'-phosphate from pyridoxamine 5'-phosphate: step 1/1.</text>
</comment>
<comment type="pathway">
    <text evidence="1">Cofactor metabolism; pyridoxal 5'-phosphate salvage; pyridoxal 5'-phosphate from pyridoxine 5'-phosphate: step 1/1.</text>
</comment>
<comment type="subunit">
    <text evidence="1">Homodimer.</text>
</comment>
<comment type="similarity">
    <text evidence="1">Belongs to the pyridoxamine 5'-phosphate oxidase family.</text>
</comment>
<feature type="chain" id="PRO_0000335785" description="Pyridoxine/pyridoxamine 5'-phosphate oxidase">
    <location>
        <begin position="1"/>
        <end position="214"/>
    </location>
</feature>
<feature type="binding site" evidence="1">
    <location>
        <begin position="8"/>
        <end position="11"/>
    </location>
    <ligand>
        <name>substrate</name>
    </ligand>
</feature>
<feature type="binding site" evidence="1">
    <location>
        <begin position="62"/>
        <end position="67"/>
    </location>
    <ligand>
        <name>FMN</name>
        <dbReference type="ChEBI" id="CHEBI:58210"/>
    </ligand>
</feature>
<feature type="binding site" evidence="1">
    <location>
        <position position="67"/>
    </location>
    <ligand>
        <name>substrate</name>
    </ligand>
</feature>
<feature type="binding site" evidence="1">
    <location>
        <begin position="77"/>
        <end position="78"/>
    </location>
    <ligand>
        <name>FMN</name>
        <dbReference type="ChEBI" id="CHEBI:58210"/>
    </ligand>
</feature>
<feature type="binding site" evidence="1">
    <location>
        <position position="84"/>
    </location>
    <ligand>
        <name>FMN</name>
        <dbReference type="ChEBI" id="CHEBI:58210"/>
    </ligand>
</feature>
<feature type="binding site" evidence="1">
    <location>
        <position position="106"/>
    </location>
    <ligand>
        <name>FMN</name>
        <dbReference type="ChEBI" id="CHEBI:58210"/>
    </ligand>
</feature>
<feature type="binding site" evidence="1">
    <location>
        <position position="124"/>
    </location>
    <ligand>
        <name>substrate</name>
    </ligand>
</feature>
<feature type="binding site" evidence="1">
    <location>
        <position position="128"/>
    </location>
    <ligand>
        <name>substrate</name>
    </ligand>
</feature>
<feature type="binding site" evidence="1">
    <location>
        <position position="132"/>
    </location>
    <ligand>
        <name>substrate</name>
    </ligand>
</feature>
<feature type="binding site" evidence="1">
    <location>
        <begin position="141"/>
        <end position="142"/>
    </location>
    <ligand>
        <name>FMN</name>
        <dbReference type="ChEBI" id="CHEBI:58210"/>
    </ligand>
</feature>
<feature type="binding site" evidence="1">
    <location>
        <position position="186"/>
    </location>
    <ligand>
        <name>FMN</name>
        <dbReference type="ChEBI" id="CHEBI:58210"/>
    </ligand>
</feature>
<feature type="binding site" evidence="1">
    <location>
        <begin position="192"/>
        <end position="194"/>
    </location>
    <ligand>
        <name>substrate</name>
    </ligand>
</feature>
<feature type="binding site" evidence="1">
    <location>
        <position position="196"/>
    </location>
    <ligand>
        <name>FMN</name>
        <dbReference type="ChEBI" id="CHEBI:58210"/>
    </ligand>
</feature>
<sequence>MKDLSNYRKSYEKSELLETNIPEDPITLFKKWFHEVEDFGGIEEVNAMTVSSIGLDGFPKARVVLLKQFTYEGFIFYTNYDSEKGRAIANNPNICLSFFWHSLERQIIIKGKVKKIAENLSDGYFESRPNGSKLGAIVSNQSEVIASRMILEEKLKQLEDNCVGKEILRPKNWGGYIVEPQEVEFWQGRPNRLHDRIRYKLSADFYWKIERLAP</sequence>
<dbReference type="EC" id="1.4.3.5" evidence="1"/>
<dbReference type="EMBL" id="AM398681">
    <property type="protein sequence ID" value="CAL43771.1"/>
    <property type="molecule type" value="Genomic_DNA"/>
</dbReference>
<dbReference type="RefSeq" id="WP_011963814.1">
    <property type="nucleotide sequence ID" value="NC_009613.3"/>
</dbReference>
<dbReference type="RefSeq" id="YP_001296578.1">
    <property type="nucleotide sequence ID" value="NC_009613.3"/>
</dbReference>
<dbReference type="SMR" id="A6H098"/>
<dbReference type="STRING" id="402612.FP1704"/>
<dbReference type="EnsemblBacteria" id="CAL43771">
    <property type="protein sequence ID" value="CAL43771"/>
    <property type="gene ID" value="FP1704"/>
</dbReference>
<dbReference type="GeneID" id="66552109"/>
<dbReference type="KEGG" id="fps:FP1704"/>
<dbReference type="PATRIC" id="fig|402612.5.peg.1719"/>
<dbReference type="eggNOG" id="COG0259">
    <property type="taxonomic scope" value="Bacteria"/>
</dbReference>
<dbReference type="HOGENOM" id="CLU_032263_2_2_10"/>
<dbReference type="OrthoDB" id="9780392at2"/>
<dbReference type="UniPathway" id="UPA01068">
    <property type="reaction ID" value="UER00304"/>
</dbReference>
<dbReference type="UniPathway" id="UPA01068">
    <property type="reaction ID" value="UER00305"/>
</dbReference>
<dbReference type="Proteomes" id="UP000006394">
    <property type="component" value="Chromosome"/>
</dbReference>
<dbReference type="GO" id="GO:0010181">
    <property type="term" value="F:FMN binding"/>
    <property type="evidence" value="ECO:0007669"/>
    <property type="project" value="UniProtKB-UniRule"/>
</dbReference>
<dbReference type="GO" id="GO:0004733">
    <property type="term" value="F:pyridoxamine phosphate oxidase activity"/>
    <property type="evidence" value="ECO:0007669"/>
    <property type="project" value="UniProtKB-UniRule"/>
</dbReference>
<dbReference type="GO" id="GO:0008615">
    <property type="term" value="P:pyridoxine biosynthetic process"/>
    <property type="evidence" value="ECO:0007669"/>
    <property type="project" value="UniProtKB-KW"/>
</dbReference>
<dbReference type="FunFam" id="2.30.110.10:FF:000020">
    <property type="entry name" value="PNPO isoform 11"/>
    <property type="match status" value="1"/>
</dbReference>
<dbReference type="Gene3D" id="2.30.110.10">
    <property type="entry name" value="Electron Transport, Fmn-binding Protein, Chain A"/>
    <property type="match status" value="1"/>
</dbReference>
<dbReference type="HAMAP" id="MF_01629">
    <property type="entry name" value="PdxH"/>
    <property type="match status" value="1"/>
</dbReference>
<dbReference type="InterPro" id="IPR000659">
    <property type="entry name" value="Pyridox_Oxase"/>
</dbReference>
<dbReference type="InterPro" id="IPR019740">
    <property type="entry name" value="Pyridox_Oxase_CS"/>
</dbReference>
<dbReference type="InterPro" id="IPR011576">
    <property type="entry name" value="Pyridox_Oxase_N"/>
</dbReference>
<dbReference type="InterPro" id="IPR019576">
    <property type="entry name" value="Pyridoxamine_oxidase_dimer_C"/>
</dbReference>
<dbReference type="InterPro" id="IPR012349">
    <property type="entry name" value="Split_barrel_FMN-bd"/>
</dbReference>
<dbReference type="NCBIfam" id="TIGR00558">
    <property type="entry name" value="pdxH"/>
    <property type="match status" value="1"/>
</dbReference>
<dbReference type="NCBIfam" id="NF004231">
    <property type="entry name" value="PRK05679.1"/>
    <property type="match status" value="1"/>
</dbReference>
<dbReference type="PANTHER" id="PTHR10851:SF0">
    <property type="entry name" value="PYRIDOXINE-5'-PHOSPHATE OXIDASE"/>
    <property type="match status" value="1"/>
</dbReference>
<dbReference type="PANTHER" id="PTHR10851">
    <property type="entry name" value="PYRIDOXINE-5-PHOSPHATE OXIDASE"/>
    <property type="match status" value="1"/>
</dbReference>
<dbReference type="Pfam" id="PF10590">
    <property type="entry name" value="PNP_phzG_C"/>
    <property type="match status" value="1"/>
</dbReference>
<dbReference type="Pfam" id="PF01243">
    <property type="entry name" value="PNPOx_N"/>
    <property type="match status" value="1"/>
</dbReference>
<dbReference type="PIRSF" id="PIRSF000190">
    <property type="entry name" value="Pyd_amn-ph_oxd"/>
    <property type="match status" value="1"/>
</dbReference>
<dbReference type="SUPFAM" id="SSF50475">
    <property type="entry name" value="FMN-binding split barrel"/>
    <property type="match status" value="1"/>
</dbReference>
<dbReference type="PROSITE" id="PS01064">
    <property type="entry name" value="PYRIDOX_OXIDASE"/>
    <property type="match status" value="1"/>
</dbReference>
<proteinExistence type="inferred from homology"/>
<organism>
    <name type="scientific">Flavobacterium psychrophilum (strain ATCC 49511 / DSM 21280 / CIP 103535 / JIP02/86)</name>
    <dbReference type="NCBI Taxonomy" id="402612"/>
    <lineage>
        <taxon>Bacteria</taxon>
        <taxon>Pseudomonadati</taxon>
        <taxon>Bacteroidota</taxon>
        <taxon>Flavobacteriia</taxon>
        <taxon>Flavobacteriales</taxon>
        <taxon>Flavobacteriaceae</taxon>
        <taxon>Flavobacterium</taxon>
    </lineage>
</organism>
<evidence type="ECO:0000255" key="1">
    <source>
        <dbReference type="HAMAP-Rule" id="MF_01629"/>
    </source>
</evidence>
<name>PDXH_FLAPJ</name>